<reference key="1">
    <citation type="journal article" date="2009" name="Nat. Genet.">
        <title>Comparative genomic and phylogeographic analysis of Mycobacterium leprae.</title>
        <authorList>
            <person name="Monot M."/>
            <person name="Honore N."/>
            <person name="Garnier T."/>
            <person name="Zidane N."/>
            <person name="Sherafi D."/>
            <person name="Paniz-Mondolfi A."/>
            <person name="Matsuoka M."/>
            <person name="Taylor G.M."/>
            <person name="Donoghue H.D."/>
            <person name="Bouwman A."/>
            <person name="Mays S."/>
            <person name="Watson C."/>
            <person name="Lockwood D."/>
            <person name="Khamispour A."/>
            <person name="Dowlati Y."/>
            <person name="Jianping S."/>
            <person name="Rea T.H."/>
            <person name="Vera-Cabrera L."/>
            <person name="Stefani M.M."/>
            <person name="Banu S."/>
            <person name="Macdonald M."/>
            <person name="Sapkota B.R."/>
            <person name="Spencer J.S."/>
            <person name="Thomas J."/>
            <person name="Harshman K."/>
            <person name="Singh P."/>
            <person name="Busso P."/>
            <person name="Gattiker A."/>
            <person name="Rougemont J."/>
            <person name="Brennan P.J."/>
            <person name="Cole S.T."/>
        </authorList>
    </citation>
    <scope>NUCLEOTIDE SEQUENCE [LARGE SCALE GENOMIC DNA]</scope>
    <source>
        <strain>Br4923</strain>
    </source>
</reference>
<feature type="chain" id="PRO_0000413595" description="F420-dependent glucose-6-phosphate dehydrogenase">
    <location>
        <begin position="1"/>
        <end position="336"/>
    </location>
</feature>
<feature type="active site" description="Proton donor" evidence="1">
    <location>
        <position position="40"/>
    </location>
</feature>
<feature type="active site" description="Proton acceptor" evidence="1">
    <location>
        <position position="109"/>
    </location>
</feature>
<feature type="binding site" evidence="1">
    <location>
        <position position="39"/>
    </location>
    <ligand>
        <name>coenzyme F420-(gamma-Glu)n</name>
        <dbReference type="ChEBI" id="CHEBI:133980"/>
    </ligand>
</feature>
<feature type="binding site" evidence="1">
    <location>
        <position position="76"/>
    </location>
    <ligand>
        <name>coenzyme F420-(gamma-Glu)n</name>
        <dbReference type="ChEBI" id="CHEBI:133980"/>
    </ligand>
</feature>
<feature type="binding site" evidence="1">
    <location>
        <begin position="107"/>
        <end position="108"/>
    </location>
    <ligand>
        <name>coenzyme F420-(gamma-Glu)n</name>
        <dbReference type="ChEBI" id="CHEBI:133980"/>
    </ligand>
</feature>
<feature type="binding site" evidence="1">
    <location>
        <position position="112"/>
    </location>
    <ligand>
        <name>coenzyme F420-(gamma-Glu)n</name>
        <dbReference type="ChEBI" id="CHEBI:133980"/>
    </ligand>
</feature>
<feature type="binding site" evidence="1">
    <location>
        <begin position="177"/>
        <end position="178"/>
    </location>
    <ligand>
        <name>coenzyme F420-(gamma-Glu)n</name>
        <dbReference type="ChEBI" id="CHEBI:133980"/>
    </ligand>
</feature>
<feature type="binding site" evidence="1">
    <location>
        <begin position="180"/>
        <end position="181"/>
    </location>
    <ligand>
        <name>coenzyme F420-(gamma-Glu)n</name>
        <dbReference type="ChEBI" id="CHEBI:133980"/>
    </ligand>
</feature>
<feature type="binding site" evidence="1">
    <location>
        <position position="195"/>
    </location>
    <ligand>
        <name>substrate</name>
    </ligand>
</feature>
<feature type="binding site" evidence="1">
    <location>
        <position position="198"/>
    </location>
    <ligand>
        <name>substrate</name>
    </ligand>
</feature>
<feature type="binding site" evidence="1">
    <location>
        <position position="259"/>
    </location>
    <ligand>
        <name>substrate</name>
    </ligand>
</feature>
<feature type="binding site" evidence="1">
    <location>
        <position position="283"/>
    </location>
    <ligand>
        <name>substrate</name>
    </ligand>
</feature>
<keyword id="KW-0119">Carbohydrate metabolism</keyword>
<keyword id="KW-0560">Oxidoreductase</keyword>
<proteinExistence type="inferred from homology"/>
<sequence length="336" mass="37199">MAELRLGYKASAEQFAPRELVELGVAAEAHGMDSATVSDHFQPWRHQGGHASFSLSWMTAVGERTNRILLGTSVLTPTFRYNPAVIGQAFATMGCLYPNRVFLGVGTGEALNEVATGYQGAWPEFKERFARLRESVRLMRELWRGDRVDFDGDYYQLKGASIYDVPEGGVPIYIAAGGPEVAKYAGRAGEGFVCTSGKGEELYTEKLIPAVLEGAAVAGRDADDIDKMIEIKMSYDPDPEQALSNIRFWAPLSLAAEQKHSIDDPIEMEKVADALPIEQVAKRWIVVSDPDEAVARVGQYVTWGLNHLVFHAPGHNQRRFLELFEKDLAPRLRRLG</sequence>
<comment type="function">
    <text evidence="1">Catalyzes the coenzyme F420-dependent oxidation of glucose 6-phosphate (G6P) to 6-phosphogluconolactone. Appears to have a role in resistance to oxidative stress, via its consumption of G6P that serves as a source of reducing power to combat oxidative stress in mycobacteria.</text>
</comment>
<comment type="catalytic activity">
    <reaction evidence="1">
        <text>oxidized coenzyme F420-(gamma-L-Glu)(n) + D-glucose 6-phosphate + H(+) = 6-phospho-D-glucono-1,5-lactone + reduced coenzyme F420-(gamma-L-Glu)(n)</text>
        <dbReference type="Rhea" id="RHEA:27294"/>
        <dbReference type="Rhea" id="RHEA-COMP:12939"/>
        <dbReference type="Rhea" id="RHEA-COMP:14378"/>
        <dbReference type="ChEBI" id="CHEBI:15378"/>
        <dbReference type="ChEBI" id="CHEBI:57955"/>
        <dbReference type="ChEBI" id="CHEBI:61548"/>
        <dbReference type="ChEBI" id="CHEBI:133980"/>
        <dbReference type="ChEBI" id="CHEBI:139511"/>
        <dbReference type="EC" id="1.1.98.2"/>
    </reaction>
</comment>
<comment type="subunit">
    <text evidence="1">Homodimer.</text>
</comment>
<comment type="similarity">
    <text evidence="1">Belongs to the F420-dependent glucose-6-phosphate dehydrogenase family.</text>
</comment>
<name>FGD_MYCLB</name>
<evidence type="ECO:0000255" key="1">
    <source>
        <dbReference type="HAMAP-Rule" id="MF_02123"/>
    </source>
</evidence>
<organism>
    <name type="scientific">Mycobacterium leprae (strain Br4923)</name>
    <dbReference type="NCBI Taxonomy" id="561304"/>
    <lineage>
        <taxon>Bacteria</taxon>
        <taxon>Bacillati</taxon>
        <taxon>Actinomycetota</taxon>
        <taxon>Actinomycetes</taxon>
        <taxon>Mycobacteriales</taxon>
        <taxon>Mycobacteriaceae</taxon>
        <taxon>Mycobacterium</taxon>
    </lineage>
</organism>
<protein>
    <recommendedName>
        <fullName evidence="1">F420-dependent glucose-6-phosphate dehydrogenase</fullName>
        <shortName evidence="1">FGD</shortName>
        <shortName evidence="1">G6PD</shortName>
        <ecNumber evidence="1">1.1.98.2</ecNumber>
    </recommendedName>
</protein>
<gene>
    <name evidence="1" type="primary">fgd</name>
    <name type="ordered locus">MLBr00269</name>
</gene>
<accession>B8ZU74</accession>
<dbReference type="EC" id="1.1.98.2" evidence="1"/>
<dbReference type="EMBL" id="FM211192">
    <property type="protein sequence ID" value="CAR70362.1"/>
    <property type="molecule type" value="Genomic_DNA"/>
</dbReference>
<dbReference type="SMR" id="B8ZU74"/>
<dbReference type="KEGG" id="mlb:MLBr00269"/>
<dbReference type="HOGENOM" id="CLU_027853_4_0_11"/>
<dbReference type="Proteomes" id="UP000006900">
    <property type="component" value="Chromosome"/>
</dbReference>
<dbReference type="GO" id="GO:0070967">
    <property type="term" value="F:coenzyme F420 binding"/>
    <property type="evidence" value="ECO:0007669"/>
    <property type="project" value="UniProtKB-UniRule"/>
</dbReference>
<dbReference type="GO" id="GO:0052749">
    <property type="term" value="F:glucose-6-phosphate dehydrogenase (coenzyme F420) activity"/>
    <property type="evidence" value="ECO:0007669"/>
    <property type="project" value="UniProtKB-EC"/>
</dbReference>
<dbReference type="GO" id="GO:0016705">
    <property type="term" value="F:oxidoreductase activity, acting on paired donors, with incorporation or reduction of molecular oxygen"/>
    <property type="evidence" value="ECO:0007669"/>
    <property type="project" value="InterPro"/>
</dbReference>
<dbReference type="GO" id="GO:0005975">
    <property type="term" value="P:carbohydrate metabolic process"/>
    <property type="evidence" value="ECO:0007669"/>
    <property type="project" value="UniProtKB-UniRule"/>
</dbReference>
<dbReference type="CDD" id="cd01097">
    <property type="entry name" value="Tetrahydromethanopterin_reductase"/>
    <property type="match status" value="1"/>
</dbReference>
<dbReference type="FunFam" id="3.20.20.30:FF:000004">
    <property type="entry name" value="F420-dependent glucose-6-phosphate dehydrogenase"/>
    <property type="match status" value="1"/>
</dbReference>
<dbReference type="Gene3D" id="3.20.20.30">
    <property type="entry name" value="Luciferase-like domain"/>
    <property type="match status" value="1"/>
</dbReference>
<dbReference type="HAMAP" id="MF_02123">
    <property type="entry name" value="F420_G6P_DH"/>
    <property type="match status" value="1"/>
</dbReference>
<dbReference type="InterPro" id="IPR019944">
    <property type="entry name" value="F420-dep_G6P_DH"/>
</dbReference>
<dbReference type="InterPro" id="IPR050564">
    <property type="entry name" value="F420-G6PD/mer"/>
</dbReference>
<dbReference type="InterPro" id="IPR019945">
    <property type="entry name" value="F420_G6P_DH-rel"/>
</dbReference>
<dbReference type="InterPro" id="IPR011251">
    <property type="entry name" value="Luciferase-like_dom"/>
</dbReference>
<dbReference type="InterPro" id="IPR036661">
    <property type="entry name" value="Luciferase-like_sf"/>
</dbReference>
<dbReference type="NCBIfam" id="TIGR03554">
    <property type="entry name" value="F420_G6P_DH"/>
    <property type="match status" value="1"/>
</dbReference>
<dbReference type="NCBIfam" id="TIGR03557">
    <property type="entry name" value="F420_G6P_family"/>
    <property type="match status" value="1"/>
</dbReference>
<dbReference type="PANTHER" id="PTHR43244">
    <property type="match status" value="1"/>
</dbReference>
<dbReference type="PANTHER" id="PTHR43244:SF1">
    <property type="entry name" value="5,10-METHYLENETETRAHYDROMETHANOPTERIN REDUCTASE"/>
    <property type="match status" value="1"/>
</dbReference>
<dbReference type="Pfam" id="PF00296">
    <property type="entry name" value="Bac_luciferase"/>
    <property type="match status" value="1"/>
</dbReference>
<dbReference type="SUPFAM" id="SSF51679">
    <property type="entry name" value="Bacterial luciferase-like"/>
    <property type="match status" value="1"/>
</dbReference>